<comment type="function">
    <text evidence="1">Catalyzes the conversion of acetaldehyde to acetyl-CoA, using NAD(+) and coenzyme A. Is the final enzyme in the meta-cleavage pathway for the degradation of aromatic compounds.</text>
</comment>
<comment type="catalytic activity">
    <reaction evidence="1">
        <text>acetaldehyde + NAD(+) + CoA = acetyl-CoA + NADH + H(+)</text>
        <dbReference type="Rhea" id="RHEA:23288"/>
        <dbReference type="ChEBI" id="CHEBI:15343"/>
        <dbReference type="ChEBI" id="CHEBI:15378"/>
        <dbReference type="ChEBI" id="CHEBI:57287"/>
        <dbReference type="ChEBI" id="CHEBI:57288"/>
        <dbReference type="ChEBI" id="CHEBI:57540"/>
        <dbReference type="ChEBI" id="CHEBI:57945"/>
        <dbReference type="EC" id="1.2.1.10"/>
    </reaction>
</comment>
<comment type="pathway">
    <text evidence="1">Aromatic compound metabolism; 3-phenylpropanoate degradation.</text>
</comment>
<comment type="subunit">
    <text evidence="1">Interacts with MhpE.</text>
</comment>
<comment type="similarity">
    <text evidence="1">Belongs to the acetaldehyde dehydrogenase family.</text>
</comment>
<sequence length="316" mass="33442">MSKRKVAIIGSGNIGTDLMIKILRHGQHLEMAVMVGIDPQSDGLARARRMGVATTHEGVIGLMNMPEFADIDIVFDATSAGAHVKNDAALREAKPDIRLIDLTPAAIGPYCVPVVNLEANVDQLNVNMVTCGGQATIPMVAAVSRVARVHYAEIIASIASKSAGPGTRANIDEFTETTSRAIEVVGGAAKGKAIIVLNPAEPPLMMRDTVYVLSDEASQDDIEASINEMAEAVQAYVPGYRLKQRVQFEVIPQDKPVNLPGVGQFSGLKTAVWLEVEGAAHYLPAYAGNLDIMTSSALATAEKMAQSLARKAGEAA</sequence>
<keyword id="KW-0058">Aromatic hydrocarbons catabolism</keyword>
<keyword id="KW-0520">NAD</keyword>
<keyword id="KW-0560">Oxidoreductase</keyword>
<gene>
    <name evidence="1" type="primary">mhpF</name>
    <name type="ordered locus">EcHS_A0415</name>
</gene>
<dbReference type="EC" id="1.2.1.10" evidence="1"/>
<dbReference type="EMBL" id="CP000802">
    <property type="protein sequence ID" value="ABV04802.1"/>
    <property type="molecule type" value="Genomic_DNA"/>
</dbReference>
<dbReference type="RefSeq" id="WP_000044314.1">
    <property type="nucleotide sequence ID" value="NC_009800.1"/>
</dbReference>
<dbReference type="SMR" id="A7ZWZ8"/>
<dbReference type="GeneID" id="93777104"/>
<dbReference type="KEGG" id="ecx:EcHS_A0415"/>
<dbReference type="HOGENOM" id="CLU_062208_0_0_6"/>
<dbReference type="UniPathway" id="UPA00714"/>
<dbReference type="GO" id="GO:0008774">
    <property type="term" value="F:acetaldehyde dehydrogenase (acetylating) activity"/>
    <property type="evidence" value="ECO:0007669"/>
    <property type="project" value="UniProtKB-UniRule"/>
</dbReference>
<dbReference type="GO" id="GO:0051287">
    <property type="term" value="F:NAD binding"/>
    <property type="evidence" value="ECO:0007669"/>
    <property type="project" value="UniProtKB-UniRule"/>
</dbReference>
<dbReference type="GO" id="GO:0019380">
    <property type="term" value="P:3-phenylpropionate catabolic process"/>
    <property type="evidence" value="ECO:0007669"/>
    <property type="project" value="UniProtKB-UniRule"/>
</dbReference>
<dbReference type="CDD" id="cd23933">
    <property type="entry name" value="ALDH_C"/>
    <property type="match status" value="1"/>
</dbReference>
<dbReference type="FunFam" id="3.30.360.10:FF:000021">
    <property type="entry name" value="Acetaldehyde dehydrogenase"/>
    <property type="match status" value="1"/>
</dbReference>
<dbReference type="Gene3D" id="3.30.360.10">
    <property type="entry name" value="Dihydrodipicolinate Reductase, domain 2"/>
    <property type="match status" value="1"/>
</dbReference>
<dbReference type="Gene3D" id="3.40.50.720">
    <property type="entry name" value="NAD(P)-binding Rossmann-like Domain"/>
    <property type="match status" value="1"/>
</dbReference>
<dbReference type="HAMAP" id="MF_01657">
    <property type="entry name" value="Ac_ald_DH_ac"/>
    <property type="match status" value="1"/>
</dbReference>
<dbReference type="InterPro" id="IPR003361">
    <property type="entry name" value="Acetaldehyde_dehydrogenase"/>
</dbReference>
<dbReference type="InterPro" id="IPR015426">
    <property type="entry name" value="Acetylaldehyde_DH_C"/>
</dbReference>
<dbReference type="InterPro" id="IPR036291">
    <property type="entry name" value="NAD(P)-bd_dom_sf"/>
</dbReference>
<dbReference type="InterPro" id="IPR000534">
    <property type="entry name" value="Semialdehyde_DH_NAD-bd"/>
</dbReference>
<dbReference type="NCBIfam" id="TIGR03215">
    <property type="entry name" value="ac_ald_DH_ac"/>
    <property type="match status" value="1"/>
</dbReference>
<dbReference type="NCBIfam" id="NF006157">
    <property type="entry name" value="PRK08300.1"/>
    <property type="match status" value="1"/>
</dbReference>
<dbReference type="Pfam" id="PF09290">
    <property type="entry name" value="AcetDehyd-dimer"/>
    <property type="match status" value="1"/>
</dbReference>
<dbReference type="Pfam" id="PF01118">
    <property type="entry name" value="Semialdhyde_dh"/>
    <property type="match status" value="1"/>
</dbReference>
<dbReference type="PIRSF" id="PIRSF015689">
    <property type="entry name" value="Actaldh_dh_actl"/>
    <property type="match status" value="1"/>
</dbReference>
<dbReference type="SMART" id="SM00859">
    <property type="entry name" value="Semialdhyde_dh"/>
    <property type="match status" value="1"/>
</dbReference>
<dbReference type="SUPFAM" id="SSF55347">
    <property type="entry name" value="Glyceraldehyde-3-phosphate dehydrogenase-like, C-terminal domain"/>
    <property type="match status" value="1"/>
</dbReference>
<dbReference type="SUPFAM" id="SSF51735">
    <property type="entry name" value="NAD(P)-binding Rossmann-fold domains"/>
    <property type="match status" value="1"/>
</dbReference>
<proteinExistence type="inferred from homology"/>
<feature type="chain" id="PRO_0000337981" description="Acetaldehyde dehydrogenase">
    <location>
        <begin position="1"/>
        <end position="316"/>
    </location>
</feature>
<feature type="active site" description="Acyl-thioester intermediate" evidence="1">
    <location>
        <position position="131"/>
    </location>
</feature>
<feature type="binding site" evidence="1">
    <location>
        <begin position="11"/>
        <end position="14"/>
    </location>
    <ligand>
        <name>NAD(+)</name>
        <dbReference type="ChEBI" id="CHEBI:57540"/>
    </ligand>
</feature>
<feature type="binding site" evidence="1">
    <location>
        <begin position="162"/>
        <end position="170"/>
    </location>
    <ligand>
        <name>NAD(+)</name>
        <dbReference type="ChEBI" id="CHEBI:57540"/>
    </ligand>
</feature>
<feature type="binding site" evidence="1">
    <location>
        <position position="289"/>
    </location>
    <ligand>
        <name>NAD(+)</name>
        <dbReference type="ChEBI" id="CHEBI:57540"/>
    </ligand>
</feature>
<protein>
    <recommendedName>
        <fullName evidence="1">Acetaldehyde dehydrogenase</fullName>
        <ecNumber evidence="1">1.2.1.10</ecNumber>
    </recommendedName>
    <alternativeName>
        <fullName evidence="1">Acetaldehyde dehydrogenase [acetylating]</fullName>
    </alternativeName>
</protein>
<accession>A7ZWZ8</accession>
<name>ACDH_ECOHS</name>
<organism>
    <name type="scientific">Escherichia coli O9:H4 (strain HS)</name>
    <dbReference type="NCBI Taxonomy" id="331112"/>
    <lineage>
        <taxon>Bacteria</taxon>
        <taxon>Pseudomonadati</taxon>
        <taxon>Pseudomonadota</taxon>
        <taxon>Gammaproteobacteria</taxon>
        <taxon>Enterobacterales</taxon>
        <taxon>Enterobacteriaceae</taxon>
        <taxon>Escherichia</taxon>
    </lineage>
</organism>
<reference key="1">
    <citation type="journal article" date="2008" name="J. Bacteriol.">
        <title>The pangenome structure of Escherichia coli: comparative genomic analysis of E. coli commensal and pathogenic isolates.</title>
        <authorList>
            <person name="Rasko D.A."/>
            <person name="Rosovitz M.J."/>
            <person name="Myers G.S.A."/>
            <person name="Mongodin E.F."/>
            <person name="Fricke W.F."/>
            <person name="Gajer P."/>
            <person name="Crabtree J."/>
            <person name="Sebaihia M."/>
            <person name="Thomson N.R."/>
            <person name="Chaudhuri R."/>
            <person name="Henderson I.R."/>
            <person name="Sperandio V."/>
            <person name="Ravel J."/>
        </authorList>
    </citation>
    <scope>NUCLEOTIDE SEQUENCE [LARGE SCALE GENOMIC DNA]</scope>
    <source>
        <strain>HS</strain>
    </source>
</reference>
<evidence type="ECO:0000255" key="1">
    <source>
        <dbReference type="HAMAP-Rule" id="MF_01657"/>
    </source>
</evidence>